<accession>B3A098</accession>
<comment type="function">
    <text evidence="1">Myoactive.</text>
</comment>
<comment type="subcellular location">
    <subcellularLocation>
        <location evidence="6">Secreted</location>
    </subcellularLocation>
</comment>
<comment type="similarity">
    <text evidence="2">Belongs to the pyrokinin family.</text>
</comment>
<dbReference type="GO" id="GO:0005576">
    <property type="term" value="C:extracellular region"/>
    <property type="evidence" value="ECO:0007669"/>
    <property type="project" value="UniProtKB-SubCell"/>
</dbReference>
<dbReference type="GO" id="GO:0005184">
    <property type="term" value="F:neuropeptide hormone activity"/>
    <property type="evidence" value="ECO:0007669"/>
    <property type="project" value="InterPro"/>
</dbReference>
<dbReference type="GO" id="GO:0007218">
    <property type="term" value="P:neuropeptide signaling pathway"/>
    <property type="evidence" value="ECO:0007669"/>
    <property type="project" value="UniProtKB-KW"/>
</dbReference>
<dbReference type="InterPro" id="IPR001484">
    <property type="entry name" value="Pyrokinin_CS"/>
</dbReference>
<dbReference type="PROSITE" id="PS00539">
    <property type="entry name" value="PYROKININ"/>
    <property type="match status" value="1"/>
</dbReference>
<sequence>SGGGEGSGMWFGPRL</sequence>
<organism>
    <name type="scientific">Austrophasma rawsonvillense</name>
    <name type="common">Gladiator</name>
    <name type="synonym">Heel-walker</name>
    <dbReference type="NCBI Taxonomy" id="253137"/>
    <lineage>
        <taxon>Eukaryota</taxon>
        <taxon>Metazoa</taxon>
        <taxon>Ecdysozoa</taxon>
        <taxon>Arthropoda</taxon>
        <taxon>Hexapoda</taxon>
        <taxon>Insecta</taxon>
        <taxon>Pterygota</taxon>
        <taxon>Neoptera</taxon>
        <taxon>Polyneoptera</taxon>
        <taxon>Mantophasmatodea</taxon>
        <taxon>Austrophasmatidae</taxon>
        <taxon>Austrophasma</taxon>
    </lineage>
</organism>
<name>PPK4_AUSRA</name>
<reference evidence="5" key="1">
    <citation type="journal article" date="2012" name="Syst. Biol.">
        <title>Peptidomics-based phylogeny and biogeography of Mantophasmatodea (Hexapoda).</title>
        <authorList>
            <person name="Predel R."/>
            <person name="Neupert S."/>
            <person name="Huetteroth W."/>
            <person name="Kahnt J."/>
            <person name="Waidelich D."/>
            <person name="Roth S."/>
        </authorList>
    </citation>
    <scope>PROTEIN SEQUENCE</scope>
    <scope>AMIDATION AT LEU-15</scope>
    <source>
        <tissue evidence="3">Abdominal perisympathetic organs</tissue>
    </source>
</reference>
<proteinExistence type="evidence at protein level"/>
<keyword id="KW-0027">Amidation</keyword>
<keyword id="KW-0903">Direct protein sequencing</keyword>
<keyword id="KW-0527">Neuropeptide</keyword>
<keyword id="KW-0964">Secreted</keyword>
<evidence type="ECO:0000250" key="1">
    <source>
        <dbReference type="UniProtKB" id="P82617"/>
    </source>
</evidence>
<evidence type="ECO:0000255" key="2"/>
<evidence type="ECO:0000269" key="3">
    <source>
    </source>
</evidence>
<evidence type="ECO:0000303" key="4">
    <source>
    </source>
</evidence>
<evidence type="ECO:0000305" key="5"/>
<evidence type="ECO:0000305" key="6">
    <source>
    </source>
</evidence>
<protein>
    <recommendedName>
        <fullName evidence="4">CAPA-Pyrokinin</fullName>
        <shortName evidence="4">CAPA-PK</shortName>
    </recommendedName>
    <alternativeName>
        <fullName evidence="1">FXPRL-amide</fullName>
    </alternativeName>
</protein>
<feature type="peptide" id="PRO_0000421602" description="CAPA-Pyrokinin" evidence="3">
    <location>
        <begin position="1"/>
        <end position="15"/>
    </location>
</feature>
<feature type="modified residue" description="Leucine amide" evidence="3">
    <location>
        <position position="15"/>
    </location>
</feature>